<keyword id="KW-0030">Aminoacyl-tRNA synthetase</keyword>
<keyword id="KW-0067">ATP-binding</keyword>
<keyword id="KW-0175">Coiled coil</keyword>
<keyword id="KW-0963">Cytoplasm</keyword>
<keyword id="KW-0436">Ligase</keyword>
<keyword id="KW-0547">Nucleotide-binding</keyword>
<keyword id="KW-0648">Protein biosynthesis</keyword>
<dbReference type="EC" id="6.1.1.9" evidence="1"/>
<dbReference type="EMBL" id="L08854">
    <property type="protein sequence ID" value="AAA57558.1"/>
    <property type="status" value="ALT_INIT"/>
    <property type="molecule type" value="Genomic_DNA"/>
</dbReference>
<dbReference type="PIR" id="A49856">
    <property type="entry name" value="A49856"/>
</dbReference>
<dbReference type="SMR" id="P36420"/>
<dbReference type="STRING" id="1582.AAW28_03910"/>
<dbReference type="eggNOG" id="COG0525">
    <property type="taxonomic scope" value="Bacteria"/>
</dbReference>
<dbReference type="GO" id="GO:0005829">
    <property type="term" value="C:cytosol"/>
    <property type="evidence" value="ECO:0007669"/>
    <property type="project" value="TreeGrafter"/>
</dbReference>
<dbReference type="GO" id="GO:0002161">
    <property type="term" value="F:aminoacyl-tRNA deacylase activity"/>
    <property type="evidence" value="ECO:0007669"/>
    <property type="project" value="InterPro"/>
</dbReference>
<dbReference type="GO" id="GO:0005524">
    <property type="term" value="F:ATP binding"/>
    <property type="evidence" value="ECO:0007669"/>
    <property type="project" value="UniProtKB-UniRule"/>
</dbReference>
<dbReference type="GO" id="GO:0004832">
    <property type="term" value="F:valine-tRNA ligase activity"/>
    <property type="evidence" value="ECO:0007669"/>
    <property type="project" value="UniProtKB-UniRule"/>
</dbReference>
<dbReference type="GO" id="GO:0006438">
    <property type="term" value="P:valyl-tRNA aminoacylation"/>
    <property type="evidence" value="ECO:0007669"/>
    <property type="project" value="UniProtKB-UniRule"/>
</dbReference>
<dbReference type="CDD" id="cd07962">
    <property type="entry name" value="Anticodon_Ia_Val"/>
    <property type="match status" value="1"/>
</dbReference>
<dbReference type="CDD" id="cd00817">
    <property type="entry name" value="ValRS_core"/>
    <property type="match status" value="1"/>
</dbReference>
<dbReference type="FunFam" id="1.10.287.380:FF:000001">
    <property type="entry name" value="Valine--tRNA ligase"/>
    <property type="match status" value="1"/>
</dbReference>
<dbReference type="FunFam" id="1.10.730.10:FF:000014">
    <property type="entry name" value="Valine--tRNA ligase"/>
    <property type="match status" value="1"/>
</dbReference>
<dbReference type="FunFam" id="3.40.50.620:FF:000032">
    <property type="entry name" value="Valine--tRNA ligase"/>
    <property type="match status" value="1"/>
</dbReference>
<dbReference type="FunFam" id="3.40.50.620:FF:000098">
    <property type="entry name" value="Valine--tRNA ligase"/>
    <property type="match status" value="1"/>
</dbReference>
<dbReference type="FunFam" id="3.90.740.10:FF:000005">
    <property type="entry name" value="Valine--tRNA ligase, mitochondrial"/>
    <property type="match status" value="1"/>
</dbReference>
<dbReference type="Gene3D" id="3.40.50.620">
    <property type="entry name" value="HUPs"/>
    <property type="match status" value="2"/>
</dbReference>
<dbReference type="Gene3D" id="1.10.730.10">
    <property type="entry name" value="Isoleucyl-tRNA Synthetase, Domain 1"/>
    <property type="match status" value="1"/>
</dbReference>
<dbReference type="Gene3D" id="1.10.287.380">
    <property type="entry name" value="Valyl-tRNA synthetase, C-terminal domain"/>
    <property type="match status" value="1"/>
</dbReference>
<dbReference type="Gene3D" id="3.90.740.10">
    <property type="entry name" value="Valyl/Leucyl/Isoleucyl-tRNA synthetase, editing domain"/>
    <property type="match status" value="1"/>
</dbReference>
<dbReference type="HAMAP" id="MF_02004">
    <property type="entry name" value="Val_tRNA_synth_type1"/>
    <property type="match status" value="1"/>
</dbReference>
<dbReference type="InterPro" id="IPR001412">
    <property type="entry name" value="aa-tRNA-synth_I_CS"/>
</dbReference>
<dbReference type="InterPro" id="IPR002300">
    <property type="entry name" value="aa-tRNA-synth_Ia"/>
</dbReference>
<dbReference type="InterPro" id="IPR033705">
    <property type="entry name" value="Anticodon_Ia_Val"/>
</dbReference>
<dbReference type="InterPro" id="IPR013155">
    <property type="entry name" value="M/V/L/I-tRNA-synth_anticd-bd"/>
</dbReference>
<dbReference type="InterPro" id="IPR014729">
    <property type="entry name" value="Rossmann-like_a/b/a_fold"/>
</dbReference>
<dbReference type="InterPro" id="IPR010978">
    <property type="entry name" value="tRNA-bd_arm"/>
</dbReference>
<dbReference type="InterPro" id="IPR009080">
    <property type="entry name" value="tRNAsynth_Ia_anticodon-bd"/>
</dbReference>
<dbReference type="InterPro" id="IPR037118">
    <property type="entry name" value="Val-tRNA_synth_C_sf"/>
</dbReference>
<dbReference type="InterPro" id="IPR019499">
    <property type="entry name" value="Val-tRNA_synth_tRNA-bd"/>
</dbReference>
<dbReference type="InterPro" id="IPR009008">
    <property type="entry name" value="Val/Leu/Ile-tRNA-synth_edit"/>
</dbReference>
<dbReference type="InterPro" id="IPR002303">
    <property type="entry name" value="Valyl-tRNA_ligase"/>
</dbReference>
<dbReference type="NCBIfam" id="NF004349">
    <property type="entry name" value="PRK05729.1"/>
    <property type="match status" value="1"/>
</dbReference>
<dbReference type="NCBIfam" id="TIGR00422">
    <property type="entry name" value="valS"/>
    <property type="match status" value="1"/>
</dbReference>
<dbReference type="PANTHER" id="PTHR11946:SF93">
    <property type="entry name" value="VALINE--TRNA LIGASE, CHLOROPLASTIC_MITOCHONDRIAL 2"/>
    <property type="match status" value="1"/>
</dbReference>
<dbReference type="PANTHER" id="PTHR11946">
    <property type="entry name" value="VALYL-TRNA SYNTHETASES"/>
    <property type="match status" value="1"/>
</dbReference>
<dbReference type="Pfam" id="PF08264">
    <property type="entry name" value="Anticodon_1"/>
    <property type="match status" value="1"/>
</dbReference>
<dbReference type="Pfam" id="PF00133">
    <property type="entry name" value="tRNA-synt_1"/>
    <property type="match status" value="1"/>
</dbReference>
<dbReference type="Pfam" id="PF10458">
    <property type="entry name" value="Val_tRNA-synt_C"/>
    <property type="match status" value="1"/>
</dbReference>
<dbReference type="PRINTS" id="PR00986">
    <property type="entry name" value="TRNASYNTHVAL"/>
</dbReference>
<dbReference type="SUPFAM" id="SSF47323">
    <property type="entry name" value="Anticodon-binding domain of a subclass of class I aminoacyl-tRNA synthetases"/>
    <property type="match status" value="1"/>
</dbReference>
<dbReference type="SUPFAM" id="SSF52374">
    <property type="entry name" value="Nucleotidylyl transferase"/>
    <property type="match status" value="1"/>
</dbReference>
<dbReference type="SUPFAM" id="SSF46589">
    <property type="entry name" value="tRNA-binding arm"/>
    <property type="match status" value="1"/>
</dbReference>
<dbReference type="SUPFAM" id="SSF50677">
    <property type="entry name" value="ValRS/IleRS/LeuRS editing domain"/>
    <property type="match status" value="1"/>
</dbReference>
<dbReference type="PROSITE" id="PS00178">
    <property type="entry name" value="AA_TRNA_LIGASE_I"/>
    <property type="match status" value="1"/>
</dbReference>
<accession>P36420</accession>
<organism>
    <name type="scientific">Lacticaseibacillus casei</name>
    <name type="common">Lactobacillus casei</name>
    <dbReference type="NCBI Taxonomy" id="1582"/>
    <lineage>
        <taxon>Bacteria</taxon>
        <taxon>Bacillati</taxon>
        <taxon>Bacillota</taxon>
        <taxon>Bacilli</taxon>
        <taxon>Lactobacillales</taxon>
        <taxon>Lactobacillaceae</taxon>
        <taxon>Lacticaseibacillus</taxon>
    </lineage>
</organism>
<name>SYV_LACCA</name>
<feature type="chain" id="PRO_0000106229" description="Valine--tRNA ligase">
    <location>
        <begin position="1"/>
        <end position="883"/>
    </location>
</feature>
<feature type="region of interest" description="Disordered" evidence="2">
    <location>
        <begin position="859"/>
        <end position="883"/>
    </location>
</feature>
<feature type="coiled-coil region" evidence="1">
    <location>
        <begin position="811"/>
        <end position="883"/>
    </location>
</feature>
<feature type="short sequence motif" description="'HIGH' region">
    <location>
        <begin position="50"/>
        <end position="60"/>
    </location>
</feature>
<feature type="short sequence motif" description="'KMSKS' region">
    <location>
        <begin position="527"/>
        <end position="531"/>
    </location>
</feature>
<feature type="binding site" evidence="1">
    <location>
        <position position="530"/>
    </location>
    <ligand>
        <name>ATP</name>
        <dbReference type="ChEBI" id="CHEBI:30616"/>
    </ligand>
</feature>
<reference key="1">
    <citation type="journal article" date="1993" name="J. Bacteriol.">
        <title>Cloning and sequence determination of the valS gene, encoding valyl-tRNA synthetase in Lactobacillus casei.</title>
        <authorList>
            <person name="Taylor B.V."/>
            <person name="Toy J."/>
            <person name="Sit T.L."/>
            <person name="Bognar A.L."/>
        </authorList>
    </citation>
    <scope>NUCLEOTIDE SEQUENCE [GENOMIC DNA]</scope>
</reference>
<evidence type="ECO:0000255" key="1">
    <source>
        <dbReference type="HAMAP-Rule" id="MF_02004"/>
    </source>
</evidence>
<evidence type="ECO:0000256" key="2">
    <source>
        <dbReference type="SAM" id="MobiDB-lite"/>
    </source>
</evidence>
<evidence type="ECO:0000305" key="3"/>
<sequence length="883" mass="100962">MEPVSDETLAPKYDHKAVEEGRYQEWLDEDVFKPSGDKKAKPYSIVIPPPNVTGKLHMGHAWDTTLQDIVIRQKRIEGFDTLWLPGMDHAGIATQAKVEAKLRKEGISRYDLGREKFVQKVWEWKDEFAKTIHGQWAKMGLSLDYSRERFTLDKGLNQAVRRVFVDLYNQGLIYRGEYIVNWDPQARTALSDIEVIHKDDKGAFYHVKYPFADGSGYIEIATTRPETMMGDTAVAVHPGDERYKDMVGTELILPLANRKIPIIEDAYVDPEFGTGAVKITPAHDPNDFQVGNRHDLKRINTMNDDGTMNENAGKYQGMDRFEARKAMVADLDKAGLLLKVEPIVHSVGHSERTGVQVEARLSTQWFVKMKPLAEAAIKAQQEPDKKVTFVPERFEHTYLQWMENIHDWVISRQLWWGHQIPAWYNKQTGETYVGMEAPKDIENWKQDPDVLDTWFSSALWPFSTMGWPNTDAPDYKRYYPTDTLVTGYDIIPFWVARMIFQGLHFTHQRPFQYTLIHGLMRDEQGRKMSKSLGNGIDPMDVIEKYGADALRWFLITGNKPGQDTRFSYKQVEAAWNFINKIWNISRFVMMNLGDLDTPQQPDPSTFDLSDKWLFAQLNETIKQVMDLSARFEFGEMGRTLYNFTWNVLADWYVEMSKEVLYGDDEQAKAAKRVNLAYALDQILRLLHPVMPFVHGKLWLALPHTGKSIVTASYPVANTAFENADATSAMDAIIALIRGVRGIRKEAGAPLKTKVDILVKLTDPALKPIFEQNFDFIDRFVNSKAFTVGTDVAEPKMAGSAVITGATIFVPLNELIDLDEEKAKLTKDAKKLEQEIARIDKKLNNQGFLSKAPEAVVAEQRTKRSDFEDQLTSTKQRLEQLQRA</sequence>
<gene>
    <name evidence="1" type="primary">valS</name>
</gene>
<protein>
    <recommendedName>
        <fullName evidence="1">Valine--tRNA ligase</fullName>
        <ecNumber evidence="1">6.1.1.9</ecNumber>
    </recommendedName>
    <alternativeName>
        <fullName evidence="1">Valyl-tRNA synthetase</fullName>
        <shortName evidence="1">ValRS</shortName>
    </alternativeName>
</protein>
<proteinExistence type="inferred from homology"/>
<comment type="function">
    <text evidence="1">Catalyzes the attachment of valine to tRNA(Val). As ValRS can inadvertently accommodate and process structurally similar amino acids such as threonine, to avoid such errors, it has a 'posttransfer' editing activity that hydrolyzes mischarged Thr-tRNA(Val) in a tRNA-dependent manner.</text>
</comment>
<comment type="catalytic activity">
    <reaction evidence="1">
        <text>tRNA(Val) + L-valine + ATP = L-valyl-tRNA(Val) + AMP + diphosphate</text>
        <dbReference type="Rhea" id="RHEA:10704"/>
        <dbReference type="Rhea" id="RHEA-COMP:9672"/>
        <dbReference type="Rhea" id="RHEA-COMP:9708"/>
        <dbReference type="ChEBI" id="CHEBI:30616"/>
        <dbReference type="ChEBI" id="CHEBI:33019"/>
        <dbReference type="ChEBI" id="CHEBI:57762"/>
        <dbReference type="ChEBI" id="CHEBI:78442"/>
        <dbReference type="ChEBI" id="CHEBI:78537"/>
        <dbReference type="ChEBI" id="CHEBI:456215"/>
        <dbReference type="EC" id="6.1.1.9"/>
    </reaction>
</comment>
<comment type="subunit">
    <text evidence="1">Monomer.</text>
</comment>
<comment type="subcellular location">
    <subcellularLocation>
        <location evidence="1">Cytoplasm</location>
    </subcellularLocation>
</comment>
<comment type="domain">
    <text evidence="1">ValRS has two distinct active sites: one for aminoacylation and one for editing. The misactivated threonine is translocated from the active site to the editing site.</text>
</comment>
<comment type="domain">
    <text evidence="1">The C-terminal coiled-coil domain is crucial for aminoacylation activity.</text>
</comment>
<comment type="similarity">
    <text evidence="1">Belongs to the class-I aminoacyl-tRNA synthetase family. ValS type 1 subfamily.</text>
</comment>
<comment type="sequence caution" evidence="3">
    <conflict type="erroneous initiation">
        <sequence resource="EMBL-CDS" id="AAA57558"/>
    </conflict>
</comment>